<dbReference type="EMBL" id="AB026658">
    <property type="protein sequence ID" value="BAB01100.1"/>
    <property type="status" value="ALT_SEQ"/>
    <property type="molecule type" value="Genomic_DNA"/>
</dbReference>
<dbReference type="EMBL" id="CP002686">
    <property type="protein sequence ID" value="AEE76084.1"/>
    <property type="molecule type" value="Genomic_DNA"/>
</dbReference>
<dbReference type="RefSeq" id="NP_188463.1">
    <property type="nucleotide sequence ID" value="NM_112719.1"/>
</dbReference>
<dbReference type="PaxDb" id="3702-AT3G18340.1"/>
<dbReference type="EnsemblPlants" id="AT3G18340.1">
    <property type="protein sequence ID" value="AT3G18340.1"/>
    <property type="gene ID" value="AT3G18340"/>
</dbReference>
<dbReference type="GeneID" id="821363"/>
<dbReference type="Gramene" id="AT3G18340.1">
    <property type="protein sequence ID" value="AT3G18340.1"/>
    <property type="gene ID" value="AT3G18340"/>
</dbReference>
<dbReference type="KEGG" id="ath:AT3G18340"/>
<dbReference type="Araport" id="AT3G18340"/>
<dbReference type="TAIR" id="AT3G18340"/>
<dbReference type="HOGENOM" id="CLU_034692_2_1_1"/>
<dbReference type="InParanoid" id="Q9LS56"/>
<dbReference type="OMA" id="RITACNG"/>
<dbReference type="PhylomeDB" id="Q9LS56"/>
<dbReference type="PRO" id="PR:Q9LS56"/>
<dbReference type="Proteomes" id="UP000006548">
    <property type="component" value="Chromosome 3"/>
</dbReference>
<dbReference type="ExpressionAtlas" id="Q9LS56">
    <property type="expression patterns" value="baseline and differential"/>
</dbReference>
<dbReference type="CDD" id="cd22157">
    <property type="entry name" value="F-box_AtFBW1-like"/>
    <property type="match status" value="1"/>
</dbReference>
<dbReference type="Gene3D" id="1.20.1280.50">
    <property type="match status" value="1"/>
</dbReference>
<dbReference type="InterPro" id="IPR050233">
    <property type="entry name" value="A_thaliana_F-box"/>
</dbReference>
<dbReference type="InterPro" id="IPR006527">
    <property type="entry name" value="F-box-assoc_dom_typ1"/>
</dbReference>
<dbReference type="InterPro" id="IPR017451">
    <property type="entry name" value="F-box-assoc_interact_dom"/>
</dbReference>
<dbReference type="InterPro" id="IPR036047">
    <property type="entry name" value="F-box-like_dom_sf"/>
</dbReference>
<dbReference type="InterPro" id="IPR001810">
    <property type="entry name" value="F-box_dom"/>
</dbReference>
<dbReference type="NCBIfam" id="TIGR01640">
    <property type="entry name" value="F_box_assoc_1"/>
    <property type="match status" value="1"/>
</dbReference>
<dbReference type="PANTHER" id="PTHR47993:SF385">
    <property type="entry name" value="F-BOX ASSOCIATED UBIQUITINATION EFFECTOR FAMILY PROTEIN-RELATED"/>
    <property type="match status" value="1"/>
</dbReference>
<dbReference type="PANTHER" id="PTHR47993">
    <property type="entry name" value="OS09G0372900 PROTEIN-RELATED"/>
    <property type="match status" value="1"/>
</dbReference>
<dbReference type="Pfam" id="PF00646">
    <property type="entry name" value="F-box"/>
    <property type="match status" value="1"/>
</dbReference>
<dbReference type="Pfam" id="PF07734">
    <property type="entry name" value="FBA_1"/>
    <property type="match status" value="1"/>
</dbReference>
<dbReference type="SMART" id="SM00256">
    <property type="entry name" value="FBOX"/>
    <property type="match status" value="1"/>
</dbReference>
<dbReference type="SUPFAM" id="SSF81383">
    <property type="entry name" value="F-box domain"/>
    <property type="match status" value="1"/>
</dbReference>
<dbReference type="PROSITE" id="PS50181">
    <property type="entry name" value="FBOX"/>
    <property type="match status" value="1"/>
</dbReference>
<gene>
    <name type="ordered locus">At3g18340</name>
    <name type="ORF">MYF24.6</name>
</gene>
<proteinExistence type="predicted"/>
<comment type="sequence caution" evidence="2">
    <conflict type="erroneous gene model prediction">
        <sequence resource="EMBL-CDS" id="BAB01100"/>
    </conflict>
</comment>
<keyword id="KW-1185">Reference proteome</keyword>
<evidence type="ECO:0000255" key="1">
    <source>
        <dbReference type="PROSITE-ProRule" id="PRU00080"/>
    </source>
</evidence>
<evidence type="ECO:0000305" key="2"/>
<accession>Q9LS56</accession>
<reference key="1">
    <citation type="journal article" date="2000" name="DNA Res.">
        <title>Structural analysis of Arabidopsis thaliana chromosome 3. I. Sequence features of the regions of 4,504,864 bp covered by sixty P1 and TAC clones.</title>
        <authorList>
            <person name="Sato S."/>
            <person name="Nakamura Y."/>
            <person name="Kaneko T."/>
            <person name="Katoh T."/>
            <person name="Asamizu E."/>
            <person name="Tabata S."/>
        </authorList>
    </citation>
    <scope>NUCLEOTIDE SEQUENCE [LARGE SCALE GENOMIC DNA]</scope>
    <source>
        <strain>cv. Columbia</strain>
    </source>
</reference>
<reference key="2">
    <citation type="journal article" date="2017" name="Plant J.">
        <title>Araport11: a complete reannotation of the Arabidopsis thaliana reference genome.</title>
        <authorList>
            <person name="Cheng C.Y."/>
            <person name="Krishnakumar V."/>
            <person name="Chan A.P."/>
            <person name="Thibaud-Nissen F."/>
            <person name="Schobel S."/>
            <person name="Town C.D."/>
        </authorList>
    </citation>
    <scope>GENOME REANNOTATION</scope>
    <source>
        <strain>cv. Columbia</strain>
    </source>
</reference>
<protein>
    <recommendedName>
        <fullName>Putative F-box protein At3g18340</fullName>
    </recommendedName>
</protein>
<organism>
    <name type="scientific">Arabidopsis thaliana</name>
    <name type="common">Mouse-ear cress</name>
    <dbReference type="NCBI Taxonomy" id="3702"/>
    <lineage>
        <taxon>Eukaryota</taxon>
        <taxon>Viridiplantae</taxon>
        <taxon>Streptophyta</taxon>
        <taxon>Embryophyta</taxon>
        <taxon>Tracheophyta</taxon>
        <taxon>Spermatophyta</taxon>
        <taxon>Magnoliopsida</taxon>
        <taxon>eudicotyledons</taxon>
        <taxon>Gunneridae</taxon>
        <taxon>Pentapetalae</taxon>
        <taxon>rosids</taxon>
        <taxon>malvids</taxon>
        <taxon>Brassicales</taxon>
        <taxon>Brassicaceae</taxon>
        <taxon>Camelineae</taxon>
        <taxon>Arabidopsis</taxon>
    </lineage>
</organism>
<feature type="chain" id="PRO_0000283430" description="Putative F-box protein At3g18340">
    <location>
        <begin position="1"/>
        <end position="361"/>
    </location>
</feature>
<feature type="domain" description="F-box" evidence="1">
    <location>
        <begin position="1"/>
        <end position="46"/>
    </location>
</feature>
<name>FB160_ARATH</name>
<sequence>MASGKLPWELEEEILCRLPPGSLVRLRSVCKHWNDLYNDKWFIKKSLGFARPQFIILAGFKIYSIGTIGLDVVDPKIEAEKWAFTRITACNGLLFRDFWNQGVTIWNPWLRQVGWIEYKEDKDFRFCGIGYDAGKPEKGYKIFGYFNRFYDTKLKIGHRFAIFECASQAFKFIDSPEWPTLAGRGEYVSLNGNLYWTAYNEDTREHFLGSFDFSTEISMHFCLLPCAKHVSGLQDKLVLTVFKGDRFALLKQSRISSNTEIWVTKDKINSSNNVVWLNLMTLSIPDFPSLFHQLSDISYFIHDMTLILCCDDNQTGVGCIFIARGDLCKKIQINYVSLGFSQCVYLPSLTSVPLEFRSLQV</sequence>